<sequence length="1030" mass="115379">MMAVASPPPEPEDLLIVKLEEDSWGSDSRPEKESHSPVPGPEVSRRCFRQFRYRDAAGPHEAFSQLWALCCRWLRPELRLKEQILELLVLEQFLSILPREVQTWVQARHPESGEEAVALVEDWHREAWAAGQQGLELCSEDSRSFEAVQEFQRFQLQPVTHGSEGQPRKQWVENARPDLSKMPPESLKESAVLTPQAPTVPKMASIGDWEVAGKSQETPSPSRQAKKEPCQDPAGGDRGDSACLGVPASKPSATSQQEQGPEIWGLSLINSGNGSAADDSLDSAQDKPVQAVAQADSRAWGEPCQWGAEDMKVSGVHWGYEETKTFLAILSESPFSEKLQTCHQNRQVYRAIAERLRARGFLRTLEQCRYRVKNLLRNYRKAKNSHPPGTCPFYEELEALVRARTAIRRTSGGPGEAVALPRLGDSDTEMDDQDEGSWEPEETVEDCSGSGLAAEESLQGPRIAGGPALLQSRIAGVHWGFEETKVFLAILSESPFAEKLRTCHQNSQIYRAIAERLRALGFLRTLEQCRYRFKNLLRSYRKAKSSCPPGTCPFYEEMDSLMRARTVIRAVEMVGEATGLPGSGQSSTEADDQEAWGEMEDEDAVRLLTPDSQPADAGFELKREEEDQISEQDVLGDLPGALSRYTTKAVCQPCDWGEDHVNGNEGEWRNTWEECSSEEDLEKLIDHQGLYLTEKPYGCDTRAKSFSRKVHFFAPQRTHSSEKPYKCLGSGKSFSDRANLSTHQRIHIGEKPYRCLECGKSFNDPSNLITHQRTHTGEKPYKCGLCWKSFNQSSNLLKHQRVHLGGPPNQRDEPGENFGQSLSYSAHWRRNSTQEGPKEPQNISMGADSPGACHPNSGEKLYSCPECGRCFSKSSALTSHQRIHSGEKPYECAVCGKSFSKSSSLANHRRTHTGEKPHKCADCGKCFSERSKLITHQRVHTGEKPYECPECGKFFRDRSNLITHQRIHTGEKPYKCRECGKCFNQSSSLIIHQRIHTGEKPYKCTECGKDFNNSSHFSAHRRTHAGGKAL</sequence>
<dbReference type="EMBL" id="AK047820">
    <property type="protein sequence ID" value="BAC33164.1"/>
    <property type="molecule type" value="mRNA"/>
</dbReference>
<dbReference type="EMBL" id="AK144249">
    <property type="protein sequence ID" value="BAE25797.1"/>
    <property type="status" value="ALT_INIT"/>
    <property type="molecule type" value="mRNA"/>
</dbReference>
<dbReference type="EMBL" id="AK153688">
    <property type="protein sequence ID" value="BAE32146.1"/>
    <property type="molecule type" value="mRNA"/>
</dbReference>
<dbReference type="EMBL" id="AK153845">
    <property type="protein sequence ID" value="BAE32209.1"/>
    <property type="molecule type" value="mRNA"/>
</dbReference>
<dbReference type="EMBL" id="AL611969">
    <property type="protein sequence ID" value="CAM23047.1"/>
    <property type="molecule type" value="Genomic_DNA"/>
</dbReference>
<dbReference type="EMBL" id="CU210837">
    <property type="protein sequence ID" value="CAQ51752.1"/>
    <property type="molecule type" value="Genomic_DNA"/>
</dbReference>
<dbReference type="EMBL" id="BC065079">
    <property type="protein sequence ID" value="AAH65079.1"/>
    <property type="molecule type" value="mRNA"/>
</dbReference>
<dbReference type="EMBL" id="BC076602">
    <property type="protein sequence ID" value="AAH76602.1"/>
    <property type="status" value="ALT_INIT"/>
    <property type="molecule type" value="mRNA"/>
</dbReference>
<dbReference type="CCDS" id="CCDS18672.2">
    <molecule id="B2KFW1-1"/>
</dbReference>
<dbReference type="RefSeq" id="NP_808426.2">
    <molecule id="B2KFW1-1"/>
    <property type="nucleotide sequence ID" value="NM_177758.5"/>
</dbReference>
<dbReference type="RefSeq" id="XP_006503194.1">
    <molecule id="B2KFW1-1"/>
    <property type="nucleotide sequence ID" value="XM_006503131.3"/>
</dbReference>
<dbReference type="RefSeq" id="XP_006503196.1">
    <molecule id="B2KFW1-1"/>
    <property type="nucleotide sequence ID" value="XM_006503133.4"/>
</dbReference>
<dbReference type="RefSeq" id="XP_006503197.1">
    <molecule id="B2KFW1-1"/>
    <property type="nucleotide sequence ID" value="XM_006503134.4"/>
</dbReference>
<dbReference type="RefSeq" id="XP_011238844.1">
    <molecule id="B2KFW1-1"/>
    <property type="nucleotide sequence ID" value="XM_011240542.4"/>
</dbReference>
<dbReference type="RefSeq" id="XP_011238845.1">
    <molecule id="B2KFW1-1"/>
    <property type="nucleotide sequence ID" value="XM_011240543.4"/>
</dbReference>
<dbReference type="RefSeq" id="XP_011238849.1">
    <molecule id="B2KFW1-2"/>
    <property type="nucleotide sequence ID" value="XM_011240547.4"/>
</dbReference>
<dbReference type="SMR" id="B2KFW1"/>
<dbReference type="FunCoup" id="B2KFW1">
    <property type="interactions" value="727"/>
</dbReference>
<dbReference type="STRING" id="10090.ENSMUSP00000095487"/>
<dbReference type="iPTMnet" id="B2KFW1"/>
<dbReference type="PhosphoSitePlus" id="B2KFW1"/>
<dbReference type="PaxDb" id="10090-ENSMUSP00000095487"/>
<dbReference type="PeptideAtlas" id="B2KFW1"/>
<dbReference type="ProteomicsDB" id="275244">
    <molecule id="B2KFW1-1"/>
</dbReference>
<dbReference type="ProteomicsDB" id="275245">
    <molecule id="B2KFW1-2"/>
</dbReference>
<dbReference type="Antibodypedia" id="8548">
    <property type="antibodies" value="144 antibodies from 27 providers"/>
</dbReference>
<dbReference type="DNASU" id="269585"/>
<dbReference type="Ensembl" id="ENSMUST00000097877.9">
    <molecule id="B2KFW1-1"/>
    <property type="protein sequence ID" value="ENSMUSP00000095487.3"/>
    <property type="gene ID" value="ENSMUSG00000061894.16"/>
</dbReference>
<dbReference type="GeneID" id="269585"/>
<dbReference type="KEGG" id="mmu:269585"/>
<dbReference type="UCSC" id="uc008uvd.2">
    <molecule id="B2KFW1-1"/>
    <property type="organism name" value="mouse"/>
</dbReference>
<dbReference type="AGR" id="MGI:2679268"/>
<dbReference type="CTD" id="7579"/>
<dbReference type="MGI" id="MGI:2679268">
    <property type="gene designation" value="Zscan20"/>
</dbReference>
<dbReference type="VEuPathDB" id="HostDB:ENSMUSG00000061894"/>
<dbReference type="eggNOG" id="KOG1721">
    <property type="taxonomic scope" value="Eukaryota"/>
</dbReference>
<dbReference type="GeneTree" id="ENSGT00940000161580"/>
<dbReference type="HOGENOM" id="CLU_002678_88_0_1"/>
<dbReference type="InParanoid" id="B2KFW1"/>
<dbReference type="OMA" id="KLQTCHQ"/>
<dbReference type="OrthoDB" id="691673at2759"/>
<dbReference type="PhylomeDB" id="B2KFW1"/>
<dbReference type="TreeFam" id="TF337082"/>
<dbReference type="BioGRID-ORCS" id="269585">
    <property type="hits" value="5 hits in 76 CRISPR screens"/>
</dbReference>
<dbReference type="PRO" id="PR:B2KFW1"/>
<dbReference type="Proteomes" id="UP000000589">
    <property type="component" value="Chromosome 4"/>
</dbReference>
<dbReference type="RNAct" id="B2KFW1">
    <property type="molecule type" value="protein"/>
</dbReference>
<dbReference type="Bgee" id="ENSMUSG00000061894">
    <property type="expression patterns" value="Expressed in ureteric bud trunk and 101 other cell types or tissues"/>
</dbReference>
<dbReference type="ExpressionAtlas" id="B2KFW1">
    <property type="expression patterns" value="baseline and differential"/>
</dbReference>
<dbReference type="GO" id="GO:0005634">
    <property type="term" value="C:nucleus"/>
    <property type="evidence" value="ECO:0007669"/>
    <property type="project" value="UniProtKB-SubCell"/>
</dbReference>
<dbReference type="GO" id="GO:0008270">
    <property type="term" value="F:zinc ion binding"/>
    <property type="evidence" value="ECO:0007669"/>
    <property type="project" value="UniProtKB-KW"/>
</dbReference>
<dbReference type="CDD" id="cd07936">
    <property type="entry name" value="SCAN"/>
    <property type="match status" value="1"/>
</dbReference>
<dbReference type="FunFam" id="1.10.10.60:FF:000032">
    <property type="entry name" value="Zinc finger and SCAN domain-containing 20"/>
    <property type="match status" value="2"/>
</dbReference>
<dbReference type="FunFam" id="3.30.160.60:FF:000056">
    <property type="entry name" value="Zinc finger and SCAN domain-containing 20"/>
    <property type="match status" value="1"/>
</dbReference>
<dbReference type="FunFam" id="3.30.160.60:FF:001024">
    <property type="entry name" value="Zinc finger and SCAN domain-containing protein 20"/>
    <property type="match status" value="1"/>
</dbReference>
<dbReference type="FunFam" id="3.30.160.60:FF:000355">
    <property type="entry name" value="zinc finger and SCAN domain-containing protein 20 isoform X1"/>
    <property type="match status" value="1"/>
</dbReference>
<dbReference type="FunFam" id="3.30.160.60:FF:001407">
    <property type="entry name" value="zinc finger and SCAN domain-containing protein 20 isoform X1"/>
    <property type="match status" value="1"/>
</dbReference>
<dbReference type="FunFam" id="3.30.160.60:FF:001971">
    <property type="entry name" value="zinc finger and SCAN domain-containing protein 20 isoform X1"/>
    <property type="match status" value="1"/>
</dbReference>
<dbReference type="FunFam" id="3.30.160.60:FF:000258">
    <property type="entry name" value="zinc finger and SCAN domain-containing protein 29 isoform X2"/>
    <property type="match status" value="1"/>
</dbReference>
<dbReference type="FunFam" id="1.10.4020.10:FF:000001">
    <property type="entry name" value="zinc finger protein 263 isoform X1"/>
    <property type="match status" value="1"/>
</dbReference>
<dbReference type="FunFam" id="3.30.160.60:FF:002343">
    <property type="entry name" value="Zinc finger protein 33A"/>
    <property type="match status" value="2"/>
</dbReference>
<dbReference type="FunFam" id="3.30.160.60:FF:000933">
    <property type="entry name" value="zinc finger protein 771"/>
    <property type="match status" value="1"/>
</dbReference>
<dbReference type="Gene3D" id="3.30.160.60">
    <property type="entry name" value="Classic Zinc Finger"/>
    <property type="match status" value="10"/>
</dbReference>
<dbReference type="Gene3D" id="1.10.4020.10">
    <property type="entry name" value="DNA breaking-rejoining enzymes"/>
    <property type="match status" value="1"/>
</dbReference>
<dbReference type="Gene3D" id="1.10.10.60">
    <property type="entry name" value="Homeodomain-like"/>
    <property type="match status" value="2"/>
</dbReference>
<dbReference type="InterPro" id="IPR044822">
    <property type="entry name" value="Myb_DNA-bind_4"/>
</dbReference>
<dbReference type="InterPro" id="IPR001005">
    <property type="entry name" value="SANT/Myb"/>
</dbReference>
<dbReference type="InterPro" id="IPR003309">
    <property type="entry name" value="SCAN_dom"/>
</dbReference>
<dbReference type="InterPro" id="IPR038269">
    <property type="entry name" value="SCAN_sf"/>
</dbReference>
<dbReference type="InterPro" id="IPR036236">
    <property type="entry name" value="Znf_C2H2_sf"/>
</dbReference>
<dbReference type="InterPro" id="IPR013087">
    <property type="entry name" value="Znf_C2H2_type"/>
</dbReference>
<dbReference type="PANTHER" id="PTHR23226">
    <property type="entry name" value="ZINC FINGER AND SCAN DOMAIN-CONTAINING"/>
    <property type="match status" value="1"/>
</dbReference>
<dbReference type="PANTHER" id="PTHR23226:SF377">
    <property type="entry name" value="ZINC FINGER AND SCAN DOMAIN-CONTAINING PROTEIN 20"/>
    <property type="match status" value="1"/>
</dbReference>
<dbReference type="Pfam" id="PF13837">
    <property type="entry name" value="Myb_DNA-bind_4"/>
    <property type="match status" value="2"/>
</dbReference>
<dbReference type="Pfam" id="PF02023">
    <property type="entry name" value="SCAN"/>
    <property type="match status" value="1"/>
</dbReference>
<dbReference type="Pfam" id="PF00096">
    <property type="entry name" value="zf-C2H2"/>
    <property type="match status" value="8"/>
</dbReference>
<dbReference type="SMART" id="SM00717">
    <property type="entry name" value="SANT"/>
    <property type="match status" value="2"/>
</dbReference>
<dbReference type="SMART" id="SM00431">
    <property type="entry name" value="SCAN"/>
    <property type="match status" value="1"/>
</dbReference>
<dbReference type="SMART" id="SM00355">
    <property type="entry name" value="ZnF_C2H2"/>
    <property type="match status" value="9"/>
</dbReference>
<dbReference type="SUPFAM" id="SSF57667">
    <property type="entry name" value="beta-beta-alpha zinc fingers"/>
    <property type="match status" value="6"/>
</dbReference>
<dbReference type="SUPFAM" id="SSF47353">
    <property type="entry name" value="Retrovirus capsid dimerization domain-like"/>
    <property type="match status" value="1"/>
</dbReference>
<dbReference type="PROSITE" id="PS50804">
    <property type="entry name" value="SCAN_BOX"/>
    <property type="match status" value="1"/>
</dbReference>
<dbReference type="PROSITE" id="PS00028">
    <property type="entry name" value="ZINC_FINGER_C2H2_1"/>
    <property type="match status" value="8"/>
</dbReference>
<dbReference type="PROSITE" id="PS50157">
    <property type="entry name" value="ZINC_FINGER_C2H2_2"/>
    <property type="match status" value="10"/>
</dbReference>
<proteinExistence type="evidence at transcript level"/>
<evidence type="ECO:0000250" key="1"/>
<evidence type="ECO:0000255" key="2">
    <source>
        <dbReference type="PROSITE-ProRule" id="PRU00042"/>
    </source>
</evidence>
<evidence type="ECO:0000255" key="3">
    <source>
        <dbReference type="PROSITE-ProRule" id="PRU00187"/>
    </source>
</evidence>
<evidence type="ECO:0000256" key="4">
    <source>
        <dbReference type="SAM" id="MobiDB-lite"/>
    </source>
</evidence>
<evidence type="ECO:0000303" key="5">
    <source>
    </source>
</evidence>
<evidence type="ECO:0000303" key="6">
    <source>
    </source>
</evidence>
<evidence type="ECO:0000305" key="7"/>
<accession>B2KFW1</accession>
<accession>B1AS93</accession>
<accession>Q3UNF0</accession>
<accession>Q6DFW6</accession>
<accession>Q8BJ07</accession>
<protein>
    <recommendedName>
        <fullName>Zinc finger and SCAN domain-containing protein 20</fullName>
    </recommendedName>
    <alternativeName>
        <fullName>Zinc finger protein 31</fullName>
    </alternativeName>
</protein>
<reference key="1">
    <citation type="journal article" date="2005" name="Science">
        <title>The transcriptional landscape of the mammalian genome.</title>
        <authorList>
            <person name="Carninci P."/>
            <person name="Kasukawa T."/>
            <person name="Katayama S."/>
            <person name="Gough J."/>
            <person name="Frith M.C."/>
            <person name="Maeda N."/>
            <person name="Oyama R."/>
            <person name="Ravasi T."/>
            <person name="Lenhard B."/>
            <person name="Wells C."/>
            <person name="Kodzius R."/>
            <person name="Shimokawa K."/>
            <person name="Bajic V.B."/>
            <person name="Brenner S.E."/>
            <person name="Batalov S."/>
            <person name="Forrest A.R."/>
            <person name="Zavolan M."/>
            <person name="Davis M.J."/>
            <person name="Wilming L.G."/>
            <person name="Aidinis V."/>
            <person name="Allen J.E."/>
            <person name="Ambesi-Impiombato A."/>
            <person name="Apweiler R."/>
            <person name="Aturaliya R.N."/>
            <person name="Bailey T.L."/>
            <person name="Bansal M."/>
            <person name="Baxter L."/>
            <person name="Beisel K.W."/>
            <person name="Bersano T."/>
            <person name="Bono H."/>
            <person name="Chalk A.M."/>
            <person name="Chiu K.P."/>
            <person name="Choudhary V."/>
            <person name="Christoffels A."/>
            <person name="Clutterbuck D.R."/>
            <person name="Crowe M.L."/>
            <person name="Dalla E."/>
            <person name="Dalrymple B.P."/>
            <person name="de Bono B."/>
            <person name="Della Gatta G."/>
            <person name="di Bernardo D."/>
            <person name="Down T."/>
            <person name="Engstrom P."/>
            <person name="Fagiolini M."/>
            <person name="Faulkner G."/>
            <person name="Fletcher C.F."/>
            <person name="Fukushima T."/>
            <person name="Furuno M."/>
            <person name="Futaki S."/>
            <person name="Gariboldi M."/>
            <person name="Georgii-Hemming P."/>
            <person name="Gingeras T.R."/>
            <person name="Gojobori T."/>
            <person name="Green R.E."/>
            <person name="Gustincich S."/>
            <person name="Harbers M."/>
            <person name="Hayashi Y."/>
            <person name="Hensch T.K."/>
            <person name="Hirokawa N."/>
            <person name="Hill D."/>
            <person name="Huminiecki L."/>
            <person name="Iacono M."/>
            <person name="Ikeo K."/>
            <person name="Iwama A."/>
            <person name="Ishikawa T."/>
            <person name="Jakt M."/>
            <person name="Kanapin A."/>
            <person name="Katoh M."/>
            <person name="Kawasawa Y."/>
            <person name="Kelso J."/>
            <person name="Kitamura H."/>
            <person name="Kitano H."/>
            <person name="Kollias G."/>
            <person name="Krishnan S.P."/>
            <person name="Kruger A."/>
            <person name="Kummerfeld S.K."/>
            <person name="Kurochkin I.V."/>
            <person name="Lareau L.F."/>
            <person name="Lazarevic D."/>
            <person name="Lipovich L."/>
            <person name="Liu J."/>
            <person name="Liuni S."/>
            <person name="McWilliam S."/>
            <person name="Madan Babu M."/>
            <person name="Madera M."/>
            <person name="Marchionni L."/>
            <person name="Matsuda H."/>
            <person name="Matsuzawa S."/>
            <person name="Miki H."/>
            <person name="Mignone F."/>
            <person name="Miyake S."/>
            <person name="Morris K."/>
            <person name="Mottagui-Tabar S."/>
            <person name="Mulder N."/>
            <person name="Nakano N."/>
            <person name="Nakauchi H."/>
            <person name="Ng P."/>
            <person name="Nilsson R."/>
            <person name="Nishiguchi S."/>
            <person name="Nishikawa S."/>
            <person name="Nori F."/>
            <person name="Ohara O."/>
            <person name="Okazaki Y."/>
            <person name="Orlando V."/>
            <person name="Pang K.C."/>
            <person name="Pavan W.J."/>
            <person name="Pavesi G."/>
            <person name="Pesole G."/>
            <person name="Petrovsky N."/>
            <person name="Piazza S."/>
            <person name="Reed J."/>
            <person name="Reid J.F."/>
            <person name="Ring B.Z."/>
            <person name="Ringwald M."/>
            <person name="Rost B."/>
            <person name="Ruan Y."/>
            <person name="Salzberg S.L."/>
            <person name="Sandelin A."/>
            <person name="Schneider C."/>
            <person name="Schoenbach C."/>
            <person name="Sekiguchi K."/>
            <person name="Semple C.A."/>
            <person name="Seno S."/>
            <person name="Sessa L."/>
            <person name="Sheng Y."/>
            <person name="Shibata Y."/>
            <person name="Shimada H."/>
            <person name="Shimada K."/>
            <person name="Silva D."/>
            <person name="Sinclair B."/>
            <person name="Sperling S."/>
            <person name="Stupka E."/>
            <person name="Sugiura K."/>
            <person name="Sultana R."/>
            <person name="Takenaka Y."/>
            <person name="Taki K."/>
            <person name="Tammoja K."/>
            <person name="Tan S.L."/>
            <person name="Tang S."/>
            <person name="Taylor M.S."/>
            <person name="Tegner J."/>
            <person name="Teichmann S.A."/>
            <person name="Ueda H.R."/>
            <person name="van Nimwegen E."/>
            <person name="Verardo R."/>
            <person name="Wei C.L."/>
            <person name="Yagi K."/>
            <person name="Yamanishi H."/>
            <person name="Zabarovsky E."/>
            <person name="Zhu S."/>
            <person name="Zimmer A."/>
            <person name="Hide W."/>
            <person name="Bult C."/>
            <person name="Grimmond S.M."/>
            <person name="Teasdale R.D."/>
            <person name="Liu E.T."/>
            <person name="Brusic V."/>
            <person name="Quackenbush J."/>
            <person name="Wahlestedt C."/>
            <person name="Mattick J.S."/>
            <person name="Hume D.A."/>
            <person name="Kai C."/>
            <person name="Sasaki D."/>
            <person name="Tomaru Y."/>
            <person name="Fukuda S."/>
            <person name="Kanamori-Katayama M."/>
            <person name="Suzuki M."/>
            <person name="Aoki J."/>
            <person name="Arakawa T."/>
            <person name="Iida J."/>
            <person name="Imamura K."/>
            <person name="Itoh M."/>
            <person name="Kato T."/>
            <person name="Kawaji H."/>
            <person name="Kawagashira N."/>
            <person name="Kawashima T."/>
            <person name="Kojima M."/>
            <person name="Kondo S."/>
            <person name="Konno H."/>
            <person name="Nakano K."/>
            <person name="Ninomiya N."/>
            <person name="Nishio T."/>
            <person name="Okada M."/>
            <person name="Plessy C."/>
            <person name="Shibata K."/>
            <person name="Shiraki T."/>
            <person name="Suzuki S."/>
            <person name="Tagami M."/>
            <person name="Waki K."/>
            <person name="Watahiki A."/>
            <person name="Okamura-Oho Y."/>
            <person name="Suzuki H."/>
            <person name="Kawai J."/>
            <person name="Hayashizaki Y."/>
        </authorList>
    </citation>
    <scope>NUCLEOTIDE SEQUENCE [LARGE SCALE MRNA] (ISOFORMS 1 AND 2)</scope>
    <source>
        <strain>C57BL/6J</strain>
        <tissue>Head</tissue>
        <tissue>Lymph node</tissue>
        <tissue>Thymus</tissue>
    </source>
</reference>
<reference key="2">
    <citation type="journal article" date="2009" name="PLoS Biol.">
        <title>Lineage-specific biology revealed by a finished genome assembly of the mouse.</title>
        <authorList>
            <person name="Church D.M."/>
            <person name="Goodstadt L."/>
            <person name="Hillier L.W."/>
            <person name="Zody M.C."/>
            <person name="Goldstein S."/>
            <person name="She X."/>
            <person name="Bult C.J."/>
            <person name="Agarwala R."/>
            <person name="Cherry J.L."/>
            <person name="DiCuccio M."/>
            <person name="Hlavina W."/>
            <person name="Kapustin Y."/>
            <person name="Meric P."/>
            <person name="Maglott D."/>
            <person name="Birtle Z."/>
            <person name="Marques A.C."/>
            <person name="Graves T."/>
            <person name="Zhou S."/>
            <person name="Teague B."/>
            <person name="Potamousis K."/>
            <person name="Churas C."/>
            <person name="Place M."/>
            <person name="Herschleb J."/>
            <person name="Runnheim R."/>
            <person name="Forrest D."/>
            <person name="Amos-Landgraf J."/>
            <person name="Schwartz D.C."/>
            <person name="Cheng Z."/>
            <person name="Lindblad-Toh K."/>
            <person name="Eichler E.E."/>
            <person name="Ponting C.P."/>
        </authorList>
    </citation>
    <scope>NUCLEOTIDE SEQUENCE [LARGE SCALE GENOMIC DNA]</scope>
    <source>
        <strain>C57BL/6J</strain>
    </source>
</reference>
<reference key="3">
    <citation type="journal article" date="2004" name="Genome Res.">
        <title>The status, quality, and expansion of the NIH full-length cDNA project: the Mammalian Gene Collection (MGC).</title>
        <authorList>
            <consortium name="The MGC Project Team"/>
        </authorList>
    </citation>
    <scope>NUCLEOTIDE SEQUENCE [LARGE SCALE MRNA] (ISOFORMS 1 AND 2)</scope>
    <source>
        <strain>C57BL/6J</strain>
        <tissue>Brain</tissue>
        <tissue>Eye</tissue>
    </source>
</reference>
<comment type="function">
    <text evidence="1">May be involved in transcriptional regulation.</text>
</comment>
<comment type="subcellular location">
    <subcellularLocation>
        <location evidence="3">Nucleus</location>
    </subcellularLocation>
</comment>
<comment type="alternative products">
    <event type="alternative splicing"/>
    <isoform>
        <id>B2KFW1-1</id>
        <name>1</name>
        <sequence type="displayed"/>
    </isoform>
    <isoform>
        <id>B2KFW1-2</id>
        <name>2</name>
        <sequence type="described" ref="VSP_036740"/>
    </isoform>
</comment>
<comment type="similarity">
    <text evidence="7">Belongs to the krueppel C2H2-type zinc-finger protein family.</text>
</comment>
<comment type="sequence caution" evidence="7">
    <conflict type="erroneous initiation">
        <sequence resource="EMBL-CDS" id="AAH76602"/>
    </conflict>
</comment>
<comment type="sequence caution" evidence="7">
    <conflict type="erroneous initiation">
        <sequence resource="EMBL-CDS" id="BAE25797"/>
    </conflict>
</comment>
<gene>
    <name type="primary">Zscan20</name>
    <name type="synonym">Zfp31</name>
</gene>
<name>ZSC20_MOUSE</name>
<feature type="chain" id="PRO_0000367588" description="Zinc finger and SCAN domain-containing protein 20">
    <location>
        <begin position="1"/>
        <end position="1030"/>
    </location>
</feature>
<feature type="domain" description="SCAN box" evidence="3">
    <location>
        <begin position="45"/>
        <end position="127"/>
    </location>
</feature>
<feature type="zinc finger region" description="C2H2-type 1; degenerate" evidence="2">
    <location>
        <begin position="697"/>
        <end position="719"/>
    </location>
</feature>
<feature type="zinc finger region" description="C2H2-type 2; degenerate" evidence="2">
    <location>
        <begin position="725"/>
        <end position="747"/>
    </location>
</feature>
<feature type="zinc finger region" description="C2H2-type 3" evidence="2">
    <location>
        <begin position="753"/>
        <end position="775"/>
    </location>
</feature>
<feature type="zinc finger region" description="C2H2-type 4" evidence="2">
    <location>
        <begin position="781"/>
        <end position="803"/>
    </location>
</feature>
<feature type="zinc finger region" description="C2H2-type 5" evidence="2">
    <location>
        <begin position="862"/>
        <end position="884"/>
    </location>
</feature>
<feature type="zinc finger region" description="C2H2-type 6" evidence="2">
    <location>
        <begin position="890"/>
        <end position="912"/>
    </location>
</feature>
<feature type="zinc finger region" description="C2H2-type 7" evidence="2">
    <location>
        <begin position="918"/>
        <end position="940"/>
    </location>
</feature>
<feature type="zinc finger region" description="C2H2-type 8" evidence="2">
    <location>
        <begin position="946"/>
        <end position="968"/>
    </location>
</feature>
<feature type="zinc finger region" description="C2H2-type 9" evidence="2">
    <location>
        <begin position="974"/>
        <end position="996"/>
    </location>
</feature>
<feature type="zinc finger region" description="C2H2-type 10" evidence="2">
    <location>
        <begin position="1002"/>
        <end position="1024"/>
    </location>
</feature>
<feature type="region of interest" description="Disordered" evidence="4">
    <location>
        <begin position="22"/>
        <end position="42"/>
    </location>
</feature>
<feature type="region of interest" description="Disordered" evidence="4">
    <location>
        <begin position="178"/>
        <end position="201"/>
    </location>
</feature>
<feature type="region of interest" description="Disordered" evidence="4">
    <location>
        <begin position="213"/>
        <end position="285"/>
    </location>
</feature>
<feature type="region of interest" description="Disordered" evidence="4">
    <location>
        <begin position="411"/>
        <end position="441"/>
    </location>
</feature>
<feature type="region of interest" description="Disordered" evidence="4">
    <location>
        <begin position="578"/>
        <end position="600"/>
    </location>
</feature>
<feature type="region of interest" description="Disordered" evidence="4">
    <location>
        <begin position="801"/>
        <end position="820"/>
    </location>
</feature>
<feature type="region of interest" description="Disordered" evidence="4">
    <location>
        <begin position="828"/>
        <end position="850"/>
    </location>
</feature>
<feature type="compositionally biased region" description="Basic and acidic residues" evidence="4">
    <location>
        <begin position="225"/>
        <end position="240"/>
    </location>
</feature>
<feature type="compositionally biased region" description="Acidic residues" evidence="4">
    <location>
        <begin position="426"/>
        <end position="441"/>
    </location>
</feature>
<feature type="compositionally biased region" description="Acidic residues" evidence="4">
    <location>
        <begin position="589"/>
        <end position="600"/>
    </location>
</feature>
<feature type="splice variant" id="VSP_036740" description="In isoform 2." evidence="5 6">
    <location>
        <begin position="1"/>
        <end position="429"/>
    </location>
</feature>
<feature type="sequence conflict" description="In Ref. 1; CAQ51752." evidence="7" ref="1">
    <original>R</original>
    <variation>C</variation>
    <location>
        <position position="176"/>
    </location>
</feature>
<feature type="sequence conflict" description="In Ref. 1; BAE25797." evidence="7" ref="1">
    <original>R</original>
    <variation>S</variation>
    <location>
        <position position="223"/>
    </location>
</feature>
<feature type="sequence conflict" description="In Ref. 1; BAE25797." evidence="7" ref="1">
    <original>D</original>
    <variation>G</variation>
    <location>
        <position position="627"/>
    </location>
</feature>
<feature type="sequence conflict" description="In Ref. 1; BAE25797." evidence="7" ref="1">
    <original>S</original>
    <variation>P</variation>
    <location>
        <position position="857"/>
    </location>
</feature>
<keyword id="KW-0025">Alternative splicing</keyword>
<keyword id="KW-0479">Metal-binding</keyword>
<keyword id="KW-0539">Nucleus</keyword>
<keyword id="KW-1185">Reference proteome</keyword>
<keyword id="KW-0677">Repeat</keyword>
<keyword id="KW-0804">Transcription</keyword>
<keyword id="KW-0805">Transcription regulation</keyword>
<keyword id="KW-0862">Zinc</keyword>
<keyword id="KW-0863">Zinc-finger</keyword>
<organism>
    <name type="scientific">Mus musculus</name>
    <name type="common">Mouse</name>
    <dbReference type="NCBI Taxonomy" id="10090"/>
    <lineage>
        <taxon>Eukaryota</taxon>
        <taxon>Metazoa</taxon>
        <taxon>Chordata</taxon>
        <taxon>Craniata</taxon>
        <taxon>Vertebrata</taxon>
        <taxon>Euteleostomi</taxon>
        <taxon>Mammalia</taxon>
        <taxon>Eutheria</taxon>
        <taxon>Euarchontoglires</taxon>
        <taxon>Glires</taxon>
        <taxon>Rodentia</taxon>
        <taxon>Myomorpha</taxon>
        <taxon>Muroidea</taxon>
        <taxon>Muridae</taxon>
        <taxon>Murinae</taxon>
        <taxon>Mus</taxon>
        <taxon>Mus</taxon>
    </lineage>
</organism>